<sequence>MSYPGYPPPPGGYPPAAPGGGPWGGAAYPPPPSMPPIGLDNVATYAGQFNQDYLSGMAANMSGTFGGANMPNLYPGAPGAGYPPVPPGGFGQPPSAQQPVPPYGMYPPPGGNPPSRMPSYPPYPGAPVPGQPMPPPGQQPPGAYPGQPPVTYPGQPPVPLPGQQQPVPSYPGYPGSGTVTPAVPPTQFGSRGTITDAPGFDPLRDAEVLRKAMKGFGTDEQAIIDCLGSRSNKQRQQILLSFKTAYGKDLIKDLKSELSGNFEKTILALMKTPVLFDIYEIKEAIKGVGTDEACLIEILASRSNEHIRELNRAYKAEFKKTLEEAIRSDTSGHFQRLLISLSQGNRDESTNVDMSLAQRDAQELYAAGENRLGTDESKFNAVLCSRSRAHLVAVFNEYQRMTGRDIEKSICREMSGDLEEGMLAVVKCLKNTPAFFAERLNKAMRGAGTKDRTLIRIMVSRSETDLLDIRSEYKRMYGKSLYHDISGDTSGDYRKILLKICGGND</sequence>
<organism>
    <name type="scientific">Homo sapiens</name>
    <name type="common">Human</name>
    <dbReference type="NCBI Taxonomy" id="9606"/>
    <lineage>
        <taxon>Eukaryota</taxon>
        <taxon>Metazoa</taxon>
        <taxon>Chordata</taxon>
        <taxon>Craniata</taxon>
        <taxon>Vertebrata</taxon>
        <taxon>Euteleostomi</taxon>
        <taxon>Mammalia</taxon>
        <taxon>Eutheria</taxon>
        <taxon>Euarchontoglires</taxon>
        <taxon>Primates</taxon>
        <taxon>Haplorrhini</taxon>
        <taxon>Catarrhini</taxon>
        <taxon>Hominidae</taxon>
        <taxon>Homo</taxon>
    </lineage>
</organism>
<protein>
    <recommendedName>
        <fullName>Annexin A11</fullName>
    </recommendedName>
    <alternativeName>
        <fullName>56 kDa autoantigen</fullName>
    </alternativeName>
    <alternativeName>
        <fullName>Annexin XI</fullName>
    </alternativeName>
    <alternativeName>
        <fullName>Annexin-11</fullName>
    </alternativeName>
    <alternativeName>
        <fullName>Calcyclin-associated annexin 50</fullName>
        <shortName>CAP-50</shortName>
    </alternativeName>
</protein>
<reference key="1">
    <citation type="journal article" date="1994" name="J. Biol. Chem.">
        <title>The 56K autoantigen is identical to human annexin XI.</title>
        <authorList>
            <person name="Misaki Y."/>
            <person name="Pruijn G.J.M."/>
            <person name="van der Kemp A.W."/>
            <person name="van Venrooij W.J."/>
        </authorList>
    </citation>
    <scope>NUCLEOTIDE SEQUENCE [MRNA] (ISOFORM 1)</scope>
    <source>
        <tissue>Teratocarcinoma</tissue>
    </source>
</reference>
<reference key="2">
    <citation type="journal article" date="2000" name="Genomics">
        <title>Annexin A11 (ANXA11) gene structure as the progenitor of paralogous annexins and source of orthologous cDNA isoforms.</title>
        <authorList>
            <person name="Bances P."/>
            <person name="Fernandez M.R."/>
            <person name="Rodriguez-Garcia M.I."/>
            <person name="Morgan R.O."/>
            <person name="Fernandez M.-P."/>
        </authorList>
    </citation>
    <scope>NUCLEOTIDE SEQUENCE [MRNA] (ISOFORM 1)</scope>
</reference>
<reference key="3">
    <citation type="journal article" date="2004" name="Nat. Genet.">
        <title>Complete sequencing and characterization of 21,243 full-length human cDNAs.</title>
        <authorList>
            <person name="Ota T."/>
            <person name="Suzuki Y."/>
            <person name="Nishikawa T."/>
            <person name="Otsuki T."/>
            <person name="Sugiyama T."/>
            <person name="Irie R."/>
            <person name="Wakamatsu A."/>
            <person name="Hayashi K."/>
            <person name="Sato H."/>
            <person name="Nagai K."/>
            <person name="Kimura K."/>
            <person name="Makita H."/>
            <person name="Sekine M."/>
            <person name="Obayashi M."/>
            <person name="Nishi T."/>
            <person name="Shibahara T."/>
            <person name="Tanaka T."/>
            <person name="Ishii S."/>
            <person name="Yamamoto J."/>
            <person name="Saito K."/>
            <person name="Kawai Y."/>
            <person name="Isono Y."/>
            <person name="Nakamura Y."/>
            <person name="Nagahari K."/>
            <person name="Murakami K."/>
            <person name="Yasuda T."/>
            <person name="Iwayanagi T."/>
            <person name="Wagatsuma M."/>
            <person name="Shiratori A."/>
            <person name="Sudo H."/>
            <person name="Hosoiri T."/>
            <person name="Kaku Y."/>
            <person name="Kodaira H."/>
            <person name="Kondo H."/>
            <person name="Sugawara M."/>
            <person name="Takahashi M."/>
            <person name="Kanda K."/>
            <person name="Yokoi T."/>
            <person name="Furuya T."/>
            <person name="Kikkawa E."/>
            <person name="Omura Y."/>
            <person name="Abe K."/>
            <person name="Kamihara K."/>
            <person name="Katsuta N."/>
            <person name="Sato K."/>
            <person name="Tanikawa M."/>
            <person name="Yamazaki M."/>
            <person name="Ninomiya K."/>
            <person name="Ishibashi T."/>
            <person name="Yamashita H."/>
            <person name="Murakawa K."/>
            <person name="Fujimori K."/>
            <person name="Tanai H."/>
            <person name="Kimata M."/>
            <person name="Watanabe M."/>
            <person name="Hiraoka S."/>
            <person name="Chiba Y."/>
            <person name="Ishida S."/>
            <person name="Ono Y."/>
            <person name="Takiguchi S."/>
            <person name="Watanabe S."/>
            <person name="Yosida M."/>
            <person name="Hotuta T."/>
            <person name="Kusano J."/>
            <person name="Kanehori K."/>
            <person name="Takahashi-Fujii A."/>
            <person name="Hara H."/>
            <person name="Tanase T.-O."/>
            <person name="Nomura Y."/>
            <person name="Togiya S."/>
            <person name="Komai F."/>
            <person name="Hara R."/>
            <person name="Takeuchi K."/>
            <person name="Arita M."/>
            <person name="Imose N."/>
            <person name="Musashino K."/>
            <person name="Yuuki H."/>
            <person name="Oshima A."/>
            <person name="Sasaki N."/>
            <person name="Aotsuka S."/>
            <person name="Yoshikawa Y."/>
            <person name="Matsunawa H."/>
            <person name="Ichihara T."/>
            <person name="Shiohata N."/>
            <person name="Sano S."/>
            <person name="Moriya S."/>
            <person name="Momiyama H."/>
            <person name="Satoh N."/>
            <person name="Takami S."/>
            <person name="Terashima Y."/>
            <person name="Suzuki O."/>
            <person name="Nakagawa S."/>
            <person name="Senoh A."/>
            <person name="Mizoguchi H."/>
            <person name="Goto Y."/>
            <person name="Shimizu F."/>
            <person name="Wakebe H."/>
            <person name="Hishigaki H."/>
            <person name="Watanabe T."/>
            <person name="Sugiyama A."/>
            <person name="Takemoto M."/>
            <person name="Kawakami B."/>
            <person name="Yamazaki M."/>
            <person name="Watanabe K."/>
            <person name="Kumagai A."/>
            <person name="Itakura S."/>
            <person name="Fukuzumi Y."/>
            <person name="Fujimori Y."/>
            <person name="Komiyama M."/>
            <person name="Tashiro H."/>
            <person name="Tanigami A."/>
            <person name="Fujiwara T."/>
            <person name="Ono T."/>
            <person name="Yamada K."/>
            <person name="Fujii Y."/>
            <person name="Ozaki K."/>
            <person name="Hirao M."/>
            <person name="Ohmori Y."/>
            <person name="Kawabata A."/>
            <person name="Hikiji T."/>
            <person name="Kobatake N."/>
            <person name="Inagaki H."/>
            <person name="Ikema Y."/>
            <person name="Okamoto S."/>
            <person name="Okitani R."/>
            <person name="Kawakami T."/>
            <person name="Noguchi S."/>
            <person name="Itoh T."/>
            <person name="Shigeta K."/>
            <person name="Senba T."/>
            <person name="Matsumura K."/>
            <person name="Nakajima Y."/>
            <person name="Mizuno T."/>
            <person name="Morinaga M."/>
            <person name="Sasaki M."/>
            <person name="Togashi T."/>
            <person name="Oyama M."/>
            <person name="Hata H."/>
            <person name="Watanabe M."/>
            <person name="Komatsu T."/>
            <person name="Mizushima-Sugano J."/>
            <person name="Satoh T."/>
            <person name="Shirai Y."/>
            <person name="Takahashi Y."/>
            <person name="Nakagawa K."/>
            <person name="Okumura K."/>
            <person name="Nagase T."/>
            <person name="Nomura N."/>
            <person name="Kikuchi H."/>
            <person name="Masuho Y."/>
            <person name="Yamashita R."/>
            <person name="Nakai K."/>
            <person name="Yada T."/>
            <person name="Nakamura Y."/>
            <person name="Ohara O."/>
            <person name="Isogai T."/>
            <person name="Sugano S."/>
        </authorList>
    </citation>
    <scope>NUCLEOTIDE SEQUENCE [LARGE SCALE MRNA] (ISOFORM 2)</scope>
    <source>
        <tissue>Spleen</tissue>
    </source>
</reference>
<reference key="4">
    <citation type="journal article" date="2004" name="Nature">
        <title>The DNA sequence and comparative analysis of human chromosome 10.</title>
        <authorList>
            <person name="Deloukas P."/>
            <person name="Earthrowl M.E."/>
            <person name="Grafham D.V."/>
            <person name="Rubenfield M."/>
            <person name="French L."/>
            <person name="Steward C.A."/>
            <person name="Sims S.K."/>
            <person name="Jones M.C."/>
            <person name="Searle S."/>
            <person name="Scott C."/>
            <person name="Howe K."/>
            <person name="Hunt S.E."/>
            <person name="Andrews T.D."/>
            <person name="Gilbert J.G.R."/>
            <person name="Swarbreck D."/>
            <person name="Ashurst J.L."/>
            <person name="Taylor A."/>
            <person name="Battles J."/>
            <person name="Bird C.P."/>
            <person name="Ainscough R."/>
            <person name="Almeida J.P."/>
            <person name="Ashwell R.I.S."/>
            <person name="Ambrose K.D."/>
            <person name="Babbage A.K."/>
            <person name="Bagguley C.L."/>
            <person name="Bailey J."/>
            <person name="Banerjee R."/>
            <person name="Bates K."/>
            <person name="Beasley H."/>
            <person name="Bray-Allen S."/>
            <person name="Brown A.J."/>
            <person name="Brown J.Y."/>
            <person name="Burford D.C."/>
            <person name="Burrill W."/>
            <person name="Burton J."/>
            <person name="Cahill P."/>
            <person name="Camire D."/>
            <person name="Carter N.P."/>
            <person name="Chapman J.C."/>
            <person name="Clark S.Y."/>
            <person name="Clarke G."/>
            <person name="Clee C.M."/>
            <person name="Clegg S."/>
            <person name="Corby N."/>
            <person name="Coulson A."/>
            <person name="Dhami P."/>
            <person name="Dutta I."/>
            <person name="Dunn M."/>
            <person name="Faulkner L."/>
            <person name="Frankish A."/>
            <person name="Frankland J.A."/>
            <person name="Garner P."/>
            <person name="Garnett J."/>
            <person name="Gribble S."/>
            <person name="Griffiths C."/>
            <person name="Grocock R."/>
            <person name="Gustafson E."/>
            <person name="Hammond S."/>
            <person name="Harley J.L."/>
            <person name="Hart E."/>
            <person name="Heath P.D."/>
            <person name="Ho T.P."/>
            <person name="Hopkins B."/>
            <person name="Horne J."/>
            <person name="Howden P.J."/>
            <person name="Huckle E."/>
            <person name="Hynds C."/>
            <person name="Johnson C."/>
            <person name="Johnson D."/>
            <person name="Kana A."/>
            <person name="Kay M."/>
            <person name="Kimberley A.M."/>
            <person name="Kershaw J.K."/>
            <person name="Kokkinaki M."/>
            <person name="Laird G.K."/>
            <person name="Lawlor S."/>
            <person name="Lee H.M."/>
            <person name="Leongamornlert D.A."/>
            <person name="Laird G."/>
            <person name="Lloyd C."/>
            <person name="Lloyd D.M."/>
            <person name="Loveland J."/>
            <person name="Lovell J."/>
            <person name="McLaren S."/>
            <person name="McLay K.E."/>
            <person name="McMurray A."/>
            <person name="Mashreghi-Mohammadi M."/>
            <person name="Matthews L."/>
            <person name="Milne S."/>
            <person name="Nickerson T."/>
            <person name="Nguyen M."/>
            <person name="Overton-Larty E."/>
            <person name="Palmer S.A."/>
            <person name="Pearce A.V."/>
            <person name="Peck A.I."/>
            <person name="Pelan S."/>
            <person name="Phillimore B."/>
            <person name="Porter K."/>
            <person name="Rice C.M."/>
            <person name="Rogosin A."/>
            <person name="Ross M.T."/>
            <person name="Sarafidou T."/>
            <person name="Sehra H.K."/>
            <person name="Shownkeen R."/>
            <person name="Skuce C.D."/>
            <person name="Smith M."/>
            <person name="Standring L."/>
            <person name="Sycamore N."/>
            <person name="Tester J."/>
            <person name="Thorpe A."/>
            <person name="Torcasso W."/>
            <person name="Tracey A."/>
            <person name="Tromans A."/>
            <person name="Tsolas J."/>
            <person name="Wall M."/>
            <person name="Walsh J."/>
            <person name="Wang H."/>
            <person name="Weinstock K."/>
            <person name="West A.P."/>
            <person name="Willey D.L."/>
            <person name="Whitehead S.L."/>
            <person name="Wilming L."/>
            <person name="Wray P.W."/>
            <person name="Young L."/>
            <person name="Chen Y."/>
            <person name="Lovering R.C."/>
            <person name="Moschonas N.K."/>
            <person name="Siebert R."/>
            <person name="Fechtel K."/>
            <person name="Bentley D."/>
            <person name="Durbin R.M."/>
            <person name="Hubbard T."/>
            <person name="Doucette-Stamm L."/>
            <person name="Beck S."/>
            <person name="Smith D.R."/>
            <person name="Rogers J."/>
        </authorList>
    </citation>
    <scope>NUCLEOTIDE SEQUENCE [LARGE SCALE GENOMIC DNA]</scope>
</reference>
<reference key="5">
    <citation type="journal article" date="2004" name="Genome Res.">
        <title>The status, quality, and expansion of the NIH full-length cDNA project: the Mammalian Gene Collection (MGC).</title>
        <authorList>
            <consortium name="The MGC Project Team"/>
        </authorList>
    </citation>
    <scope>NUCLEOTIDE SEQUENCE [LARGE SCALE MRNA] (ISOFORM 1)</scope>
    <source>
        <tissue>Lymph</tissue>
    </source>
</reference>
<reference key="6">
    <citation type="journal article" date="2002" name="Biochem. Biophys. Res. Commun.">
        <title>ALG-2 interacts with the amino-terminal domain of annexin XI in a Ca(2+)-dependent manner.</title>
        <authorList>
            <person name="Satoh H."/>
            <person name="Shibata H."/>
            <person name="Nakano Y."/>
            <person name="Kitaura Y."/>
            <person name="Maki M."/>
        </authorList>
    </citation>
    <scope>INTERACTION WITH PDCD6</scope>
</reference>
<reference key="7">
    <citation type="journal article" date="2003" name="J. Biol. Chem.">
        <title>Calcium- and cell cycle-dependent association of annexin 11 with the nuclear envelope.</title>
        <authorList>
            <person name="Tomas A."/>
            <person name="Moss S.E."/>
        </authorList>
    </citation>
    <scope>SUBCELLULAR LOCATION</scope>
</reference>
<reference key="8">
    <citation type="journal article" date="2003" name="J. Biol. Chem.">
        <title>Dissecting the cellular functions of annexin XI using recombinant human annexin XI-specific autoantibodies cloned by phage display.</title>
        <authorList>
            <person name="Farnaes L."/>
            <person name="Ditzel H.J."/>
        </authorList>
    </citation>
    <scope>SUBCELLULAR LOCATION</scope>
</reference>
<reference key="9">
    <citation type="journal article" date="2004" name="J. Cell Biol.">
        <title>Annexin 11 is required for midbody formation and completion of the terminal phase of cytokinesis.</title>
        <authorList>
            <person name="Tomas A."/>
            <person name="Futter C."/>
            <person name="Moss S.E."/>
        </authorList>
    </citation>
    <scope>FUNCTION</scope>
    <scope>SUBCELLULAR LOCATION</scope>
    <scope>INTERACTION WITH KIF23</scope>
</reference>
<reference key="10">
    <citation type="journal article" date="2006" name="J. Proteome Res.">
        <title>Proteomic and bioinformatic characterization of the biogenesis and function of melanosomes.</title>
        <authorList>
            <person name="Chi A."/>
            <person name="Valencia J.C."/>
            <person name="Hu Z.-Z."/>
            <person name="Watabe H."/>
            <person name="Yamaguchi H."/>
            <person name="Mangini N.J."/>
            <person name="Huang H."/>
            <person name="Canfield V.A."/>
            <person name="Cheng K.C."/>
            <person name="Yang F."/>
            <person name="Abe R."/>
            <person name="Yamagishi S."/>
            <person name="Shabanowitz J."/>
            <person name="Hearing V.J."/>
            <person name="Wu C."/>
            <person name="Appella E."/>
            <person name="Hunt D.F."/>
        </authorList>
    </citation>
    <scope>SUBCELLULAR LOCATION [LARGE SCALE ANALYSIS]</scope>
    <source>
        <tissue>Melanoma</tissue>
    </source>
</reference>
<reference key="11">
    <citation type="journal article" date="2008" name="J. Biol. Chem.">
        <title>Identification of Alix-type and non-Alix-type ALG-2-binding sites in human phospholipid scramblase 3: differential binding to an alternatively spliced isoform and amino acid-substituted mutants.</title>
        <authorList>
            <person name="Shibata H."/>
            <person name="Suzuki H."/>
            <person name="Kakiuchi T."/>
            <person name="Inuzuka T."/>
            <person name="Yoshida H."/>
            <person name="Mizuno T."/>
            <person name="Maki M."/>
        </authorList>
    </citation>
    <scope>INTERACTION WITH PDCD6</scope>
</reference>
<reference key="12">
    <citation type="journal article" date="2009" name="Science">
        <title>Lysine acetylation targets protein complexes and co-regulates major cellular functions.</title>
        <authorList>
            <person name="Choudhary C."/>
            <person name="Kumar C."/>
            <person name="Gnad F."/>
            <person name="Nielsen M.L."/>
            <person name="Rehman M."/>
            <person name="Walther T.C."/>
            <person name="Olsen J.V."/>
            <person name="Mann M."/>
        </authorList>
    </citation>
    <scope>ACETYLATION [LARGE SCALE ANALYSIS] AT LYS-248; LYS-255 AND LYS-479</scope>
    <scope>IDENTIFICATION BY MASS SPECTROMETRY [LARGE SCALE ANALYSIS]</scope>
</reference>
<reference key="13">
    <citation type="journal article" date="2011" name="BMC Syst. Biol.">
        <title>Initial characterization of the human central proteome.</title>
        <authorList>
            <person name="Burkard T.R."/>
            <person name="Planyavsky M."/>
            <person name="Kaupe I."/>
            <person name="Breitwieser F.P."/>
            <person name="Buerckstuemmer T."/>
            <person name="Bennett K.L."/>
            <person name="Superti-Furga G."/>
            <person name="Colinge J."/>
        </authorList>
    </citation>
    <scope>IDENTIFICATION BY MASS SPECTROMETRY [LARGE SCALE ANALYSIS]</scope>
</reference>
<reference key="14">
    <citation type="journal article" date="2014" name="J. Proteomics">
        <title>An enzyme assisted RP-RPLC approach for in-depth analysis of human liver phosphoproteome.</title>
        <authorList>
            <person name="Bian Y."/>
            <person name="Song C."/>
            <person name="Cheng K."/>
            <person name="Dong M."/>
            <person name="Wang F."/>
            <person name="Huang J."/>
            <person name="Sun D."/>
            <person name="Wang L."/>
            <person name="Ye M."/>
            <person name="Zou H."/>
        </authorList>
    </citation>
    <scope>IDENTIFICATION BY MASS SPECTROMETRY [LARGE SCALE ANALYSIS]</scope>
    <source>
        <tissue>Liver</tissue>
    </source>
</reference>
<reference key="15">
    <citation type="journal article" date="2015" name="Proteomics">
        <title>N-terminome analysis of the human mitochondrial proteome.</title>
        <authorList>
            <person name="Vaca Jacome A.S."/>
            <person name="Rabilloud T."/>
            <person name="Schaeffer-Reiss C."/>
            <person name="Rompais M."/>
            <person name="Ayoub D."/>
            <person name="Lane L."/>
            <person name="Bairoch A."/>
            <person name="Van Dorsselaer A."/>
            <person name="Carapito C."/>
        </authorList>
    </citation>
    <scope>IDENTIFICATION BY MASS SPECTROMETRY [LARGE SCALE ANALYSIS]</scope>
</reference>
<reference key="16">
    <citation type="journal article" date="2017" name="Sci. Transl. Med.">
        <title>Mutations in the vesicular trafficking protein annexin A11 are associated with amyotrophic lateral sclerosis.</title>
        <authorList>
            <person name="Smith B.N."/>
            <person name="Topp S.D."/>
            <person name="Fallini C."/>
            <person name="Shibata H."/>
            <person name="Chen H.J."/>
            <person name="Troakes C."/>
            <person name="King A."/>
            <person name="Ticozzi N."/>
            <person name="Kenna K.P."/>
            <person name="Soragia-Gkazi A."/>
            <person name="Miller J.W."/>
            <person name="Sato A."/>
            <person name="Dias D.M."/>
            <person name="Jeon M."/>
            <person name="Vance C."/>
            <person name="Wong C.H."/>
            <person name="de Majo M."/>
            <person name="Kattuah W."/>
            <person name="Mitchell J.C."/>
            <person name="Scotter E.L."/>
            <person name="Parkin N.W."/>
            <person name="Sapp P.C."/>
            <person name="Nolan M."/>
            <person name="Nestor P.J."/>
            <person name="Simpson M."/>
            <person name="Weale M."/>
            <person name="Lek M."/>
            <person name="Baas F."/>
            <person name="Vianney de Jong J.M."/>
            <person name="Ten Asbroek A.L.M.A."/>
            <person name="Redondo A.G."/>
            <person name="Esteban-Perez J."/>
            <person name="Tiloca C."/>
            <person name="Verde F."/>
            <person name="Duga S."/>
            <person name="Leigh N."/>
            <person name="Pall H."/>
            <person name="Morrison K.E."/>
            <person name="Al-Chalabi A."/>
            <person name="Shaw P.J."/>
            <person name="Kirby J."/>
            <person name="Turner M.R."/>
            <person name="Talbot K."/>
            <person name="Hardiman O."/>
            <person name="Glass J.D."/>
            <person name="De Belleroche J."/>
            <person name="Maki M."/>
            <person name="Moss S.E."/>
            <person name="Miller C."/>
            <person name="Gellera C."/>
            <person name="Ratti A."/>
            <person name="Al-Sarraj S."/>
            <person name="Brown R.H. Jr."/>
            <person name="Silani V."/>
            <person name="Landers J.E."/>
            <person name="Shaw C.E."/>
        </authorList>
    </citation>
    <scope>INVOLVEMENT IN ALS23</scope>
    <scope>VARIANTS ALS23 ARG-38; GLY-40; ARG-175; GLU-189; GLN-235 AND CYS-346</scope>
    <scope>CHARACTERIZATION OF VARIANTS ALS23 ARG-38; GLY-40; GLU-189 AND GLN-235</scope>
    <scope>INTERACTION WITH S100A6</scope>
    <scope>SUBCELLULAR LOCATION</scope>
</reference>
<reference key="17">
    <citation type="journal article" date="2021" name="Ann. Neurol.">
        <title>A Novel Multisystem Proteinopathy Caused by a Missense ANXA11 Variant.</title>
        <authorList>
            <person name="Leoni T.B."/>
            <person name="Gonzalez-Salazar C."/>
            <person name="Rezende T.J.R."/>
            <person name="Hernandez A.L.C."/>
            <person name="Mattos A.H.B."/>
            <person name="Coimbra Neto A.R."/>
            <person name="da Graca F.F."/>
            <person name="Goncalves J.P.N."/>
            <person name="Martinez A.R.M."/>
            <person name="Taniguti L."/>
            <person name="Kitajima J.P."/>
            <person name="Kok F."/>
            <person name="Rogerio F."/>
            <person name="da Silva A.M.S."/>
            <person name="de Oliveira A.L.R."/>
            <person name="Zanoteli E."/>
            <person name="Nucci A."/>
            <person name="Franca M.C. Jr."/>
        </authorList>
    </citation>
    <scope>INVOLVEMENT IN IBMWMA</scope>
    <scope>VARIANT IBMWMA TYR-40</scope>
</reference>
<name>ANX11_HUMAN</name>
<gene>
    <name type="primary">ANXA11</name>
    <name type="synonym">ANX11</name>
</gene>
<feature type="chain" id="PRO_0000067510" description="Annexin A11">
    <location>
        <begin position="1"/>
        <end position="505"/>
    </location>
</feature>
<feature type="repeat" description="Annexin 1" evidence="2">
    <location>
        <begin position="200"/>
        <end position="271"/>
    </location>
</feature>
<feature type="repeat" description="Annexin 2" evidence="2">
    <location>
        <begin position="272"/>
        <end position="343"/>
    </location>
</feature>
<feature type="repeat" description="Annexin 3" evidence="2">
    <location>
        <begin position="355"/>
        <end position="427"/>
    </location>
</feature>
<feature type="repeat" description="Annexin 4" evidence="2">
    <location>
        <begin position="431"/>
        <end position="502"/>
    </location>
</feature>
<feature type="region of interest" description="Disordered" evidence="3">
    <location>
        <begin position="1"/>
        <end position="38"/>
    </location>
</feature>
<feature type="region of interest" description="Disordered" evidence="3">
    <location>
        <begin position="84"/>
        <end position="199"/>
    </location>
</feature>
<feature type="compositionally biased region" description="Pro residues" evidence="3">
    <location>
        <begin position="1"/>
        <end position="17"/>
    </location>
</feature>
<feature type="compositionally biased region" description="Pro residues" evidence="3">
    <location>
        <begin position="99"/>
        <end position="160"/>
    </location>
</feature>
<feature type="compositionally biased region" description="Low complexity" evidence="3">
    <location>
        <begin position="161"/>
        <end position="177"/>
    </location>
</feature>
<feature type="modified residue" description="N6-acetyllysine" evidence="11">
    <location>
        <position position="248"/>
    </location>
</feature>
<feature type="modified residue" description="N6-acetyllysine" evidence="11">
    <location>
        <position position="255"/>
    </location>
</feature>
<feature type="modified residue" description="N6-acetyllysine" evidence="11">
    <location>
        <position position="479"/>
    </location>
</feature>
<feature type="splice variant" id="VSP_054553" description="In isoform 2." evidence="9">
    <location>
        <begin position="1"/>
        <end position="33"/>
    </location>
</feature>
<feature type="sequence variant" id="VAR_080653" description="In ALS23; uncertain significance; changed cytoplasmic localization with decreased association with vesicle-like structures; increased interaction with S100A6; dbSNP:rs142083484." evidence="7">
    <original>G</original>
    <variation>R</variation>
    <location>
        <position position="38"/>
    </location>
</feature>
<feature type="sequence variant" id="VAR_080654" description="In ALS23; forms cytoplasmic aggregates in patient tissues; no effect on nuclear and cytoplasmic localization; loss of interaction with S100A6; dbSNP:rs1247392012." evidence="7">
    <original>D</original>
    <variation>G</variation>
    <location>
        <position position="40"/>
    </location>
</feature>
<feature type="sequence variant" id="VAR_087101" description="In IBMWMA." evidence="8">
    <original>D</original>
    <variation>Y</variation>
    <location>
        <position position="40"/>
    </location>
</feature>
<feature type="sequence variant" id="VAR_080655" description="In ALS23; uncertain significance; dbSNP:rs754594235." evidence="7">
    <original>G</original>
    <variation>R</variation>
    <location>
        <position position="175"/>
    </location>
</feature>
<feature type="sequence variant" id="VAR_080656" description="In ALS23; uncertain significance; no effect on aggregation; loss of interaction with S100A6; dbSNP:rs569546089." evidence="7">
    <original>G</original>
    <variation>E</variation>
    <location>
        <position position="189"/>
    </location>
</feature>
<feature type="sequence variant" id="VAR_048259" description="In dbSNP:rs2229554.">
    <original>R</original>
    <variation>Q</variation>
    <location>
        <position position="191"/>
    </location>
</feature>
<feature type="sequence variant" id="VAR_012006" description="In dbSNP:rs1049550.">
    <original>R</original>
    <variation>C</variation>
    <location>
        <position position="230"/>
    </location>
</feature>
<feature type="sequence variant" id="VAR_080657" description="In ALS23; uncertain significance; increased aggregation in the cytoplasm sequestering the wild-type protein in these aggregates; loss of interaction with S100A6; dbSNP:rs765489119." evidence="7">
    <original>R</original>
    <variation>Q</variation>
    <location>
        <position position="235"/>
    </location>
</feature>
<feature type="sequence variant" id="VAR_080658" description="In ALS23; uncertain significance; dbSNP:rs770574196." evidence="7">
    <original>R</original>
    <variation>C</variation>
    <location>
        <position position="346"/>
    </location>
</feature>
<feature type="sequence variant" id="VAR_012007" description="In dbSNP:rs1802932.">
    <original>I</original>
    <variation>V</variation>
    <location>
        <position position="457"/>
    </location>
</feature>
<feature type="strand" evidence="12">
    <location>
        <begin position="40"/>
        <end position="50"/>
    </location>
</feature>
<feature type="strand" evidence="12">
    <location>
        <begin position="56"/>
        <end position="65"/>
    </location>
</feature>
<dbReference type="EMBL" id="L19605">
    <property type="protein sequence ID" value="AAA19734.1"/>
    <property type="molecule type" value="mRNA"/>
</dbReference>
<dbReference type="EMBL" id="AJ278463">
    <property type="protein sequence ID" value="CAB94995.1"/>
    <property type="molecule type" value="mRNA"/>
</dbReference>
<dbReference type="EMBL" id="AJ278464">
    <property type="protein sequence ID" value="CAB94996.1"/>
    <property type="molecule type" value="mRNA"/>
</dbReference>
<dbReference type="EMBL" id="AJ278465">
    <property type="protein sequence ID" value="CAB94997.1"/>
    <property type="molecule type" value="mRNA"/>
</dbReference>
<dbReference type="EMBL" id="AK301047">
    <property type="protein sequence ID" value="BAG62659.1"/>
    <property type="molecule type" value="mRNA"/>
</dbReference>
<dbReference type="EMBL" id="AL356095">
    <property type="status" value="NOT_ANNOTATED_CDS"/>
    <property type="molecule type" value="Genomic_DNA"/>
</dbReference>
<dbReference type="EMBL" id="AL513174">
    <property type="status" value="NOT_ANNOTATED_CDS"/>
    <property type="molecule type" value="Genomic_DNA"/>
</dbReference>
<dbReference type="EMBL" id="BC007564">
    <property type="protein sequence ID" value="AAH07564.1"/>
    <property type="molecule type" value="mRNA"/>
</dbReference>
<dbReference type="CCDS" id="CCDS60576.1">
    <molecule id="P50995-2"/>
</dbReference>
<dbReference type="CCDS" id="CCDS7364.1">
    <molecule id="P50995-1"/>
</dbReference>
<dbReference type="PIR" id="A53152">
    <property type="entry name" value="A53152"/>
</dbReference>
<dbReference type="RefSeq" id="NP_001148.1">
    <molecule id="P50995-1"/>
    <property type="nucleotide sequence ID" value="NM_001157.3"/>
</dbReference>
<dbReference type="RefSeq" id="NP_001265336.1">
    <molecule id="P50995-1"/>
    <property type="nucleotide sequence ID" value="NM_001278407.2"/>
</dbReference>
<dbReference type="RefSeq" id="NP_001265337.1">
    <molecule id="P50995-1"/>
    <property type="nucleotide sequence ID" value="NM_001278408.2"/>
</dbReference>
<dbReference type="RefSeq" id="NP_001265338.1">
    <molecule id="P50995-2"/>
    <property type="nucleotide sequence ID" value="NM_001278409.2"/>
</dbReference>
<dbReference type="RefSeq" id="NP_665875.1">
    <molecule id="P50995-1"/>
    <property type="nucleotide sequence ID" value="NM_145868.2"/>
</dbReference>
<dbReference type="RefSeq" id="NP_665876.1">
    <molecule id="P50995-1"/>
    <property type="nucleotide sequence ID" value="NM_145869.2"/>
</dbReference>
<dbReference type="RefSeq" id="XP_011538038.1">
    <property type="nucleotide sequence ID" value="XM_011539736.2"/>
</dbReference>
<dbReference type="RefSeq" id="XP_054221670.1">
    <molecule id="P50995-1"/>
    <property type="nucleotide sequence ID" value="XM_054365695.1"/>
</dbReference>
<dbReference type="PDB" id="9FOF">
    <property type="method" value="EM"/>
    <property type="resolution" value="2.90 A"/>
    <property type="chains" value="B/D/F/H/J/r=39-74"/>
</dbReference>
<dbReference type="PDB" id="9FOR">
    <property type="method" value="EM"/>
    <property type="resolution" value="2.75 A"/>
    <property type="chains" value="B/D/F/H/p=39-74"/>
</dbReference>
<dbReference type="PDBsum" id="9FOF"/>
<dbReference type="PDBsum" id="9FOR"/>
<dbReference type="EMDB" id="EMD-50621"/>
<dbReference type="EMDB" id="EMD-50628"/>
<dbReference type="SASBDB" id="P50995"/>
<dbReference type="SMR" id="P50995"/>
<dbReference type="BioGRID" id="106808">
    <property type="interactions" value="111"/>
</dbReference>
<dbReference type="ELM" id="P50995"/>
<dbReference type="FunCoup" id="P50995">
    <property type="interactions" value="1553"/>
</dbReference>
<dbReference type="IntAct" id="P50995">
    <property type="interactions" value="38"/>
</dbReference>
<dbReference type="MINT" id="P50995"/>
<dbReference type="STRING" id="9606.ENSP00000398610"/>
<dbReference type="TCDB" id="3.A.5.9.1">
    <property type="family name" value="the general secretory pathway (sec) family"/>
</dbReference>
<dbReference type="GlyGen" id="P50995">
    <property type="glycosylation" value="1 site, 1 O-linked glycan (1 site)"/>
</dbReference>
<dbReference type="iPTMnet" id="P50995"/>
<dbReference type="MetOSite" id="P50995"/>
<dbReference type="PhosphoSitePlus" id="P50995"/>
<dbReference type="SwissPalm" id="P50995"/>
<dbReference type="BioMuta" id="ANXA11"/>
<dbReference type="DMDM" id="1703322"/>
<dbReference type="REPRODUCTION-2DPAGE" id="P50995"/>
<dbReference type="CPTAC" id="CPTAC-1217"/>
<dbReference type="CPTAC" id="CPTAC-1218"/>
<dbReference type="jPOST" id="P50995"/>
<dbReference type="MassIVE" id="P50995"/>
<dbReference type="PaxDb" id="9606-ENSP00000398610"/>
<dbReference type="PeptideAtlas" id="P50995"/>
<dbReference type="PRIDE" id="P50995"/>
<dbReference type="ProteomicsDB" id="5263"/>
<dbReference type="ProteomicsDB" id="56275">
    <molecule id="P50995-1"/>
</dbReference>
<dbReference type="Antibodypedia" id="3904">
    <property type="antibodies" value="331 antibodies from 40 providers"/>
</dbReference>
<dbReference type="DNASU" id="311"/>
<dbReference type="Ensembl" id="ENST00000265447.8">
    <molecule id="P50995-2"/>
    <property type="protein sequence ID" value="ENSP00000265447.5"/>
    <property type="gene ID" value="ENSG00000122359.18"/>
</dbReference>
<dbReference type="Ensembl" id="ENST00000372231.7">
    <molecule id="P50995-1"/>
    <property type="protein sequence ID" value="ENSP00000361305.3"/>
    <property type="gene ID" value="ENSG00000122359.18"/>
</dbReference>
<dbReference type="Ensembl" id="ENST00000422982.8">
    <molecule id="P50995-1"/>
    <property type="protein sequence ID" value="ENSP00000404412.2"/>
    <property type="gene ID" value="ENSG00000122359.18"/>
</dbReference>
<dbReference type="Ensembl" id="ENST00000438331.5">
    <molecule id="P50995-1"/>
    <property type="protein sequence ID" value="ENSP00000398610.1"/>
    <property type="gene ID" value="ENSG00000122359.18"/>
</dbReference>
<dbReference type="GeneID" id="311"/>
<dbReference type="KEGG" id="hsa:311"/>
<dbReference type="MANE-Select" id="ENST00000422982.8">
    <property type="protein sequence ID" value="ENSP00000404412.2"/>
    <property type="RefSeq nucleotide sequence ID" value="NM_145868.2"/>
    <property type="RefSeq protein sequence ID" value="NP_665875.1"/>
</dbReference>
<dbReference type="UCSC" id="uc057umu.1">
    <molecule id="P50995-1"/>
    <property type="organism name" value="human"/>
</dbReference>
<dbReference type="AGR" id="HGNC:535"/>
<dbReference type="CTD" id="311"/>
<dbReference type="DisGeNET" id="311"/>
<dbReference type="GeneCards" id="ANXA11"/>
<dbReference type="HGNC" id="HGNC:535">
    <property type="gene designation" value="ANXA11"/>
</dbReference>
<dbReference type="HPA" id="ENSG00000122359">
    <property type="expression patterns" value="Low tissue specificity"/>
</dbReference>
<dbReference type="MalaCards" id="ANXA11"/>
<dbReference type="MIM" id="602572">
    <property type="type" value="gene"/>
</dbReference>
<dbReference type="MIM" id="617839">
    <property type="type" value="phenotype"/>
</dbReference>
<dbReference type="MIM" id="619733">
    <property type="type" value="phenotype"/>
</dbReference>
<dbReference type="neXtProt" id="NX_P50995"/>
<dbReference type="OpenTargets" id="ENSG00000122359"/>
<dbReference type="Orphanet" id="803">
    <property type="disease" value="Amyotrophic lateral sclerosis"/>
</dbReference>
<dbReference type="PharmGKB" id="PA24825"/>
<dbReference type="VEuPathDB" id="HostDB:ENSG00000122359"/>
<dbReference type="eggNOG" id="KOG0819">
    <property type="taxonomic scope" value="Eukaryota"/>
</dbReference>
<dbReference type="GeneTree" id="ENSGT00940000156914"/>
<dbReference type="HOGENOM" id="CLU_025300_6_0_1"/>
<dbReference type="InParanoid" id="P50995"/>
<dbReference type="OMA" id="GQQPMTY"/>
<dbReference type="OrthoDB" id="37886at2759"/>
<dbReference type="PAN-GO" id="P50995">
    <property type="GO annotations" value="4 GO annotations based on evolutionary models"/>
</dbReference>
<dbReference type="PhylomeDB" id="P50995"/>
<dbReference type="TreeFam" id="TF105452"/>
<dbReference type="PathwayCommons" id="P50995"/>
<dbReference type="SignaLink" id="P50995"/>
<dbReference type="BioGRID-ORCS" id="311">
    <property type="hits" value="10 hits in 1163 CRISPR screens"/>
</dbReference>
<dbReference type="CD-CODE" id="8C2F96ED">
    <property type="entry name" value="Centrosome"/>
</dbReference>
<dbReference type="CD-CODE" id="D8E9712B">
    <property type="entry name" value="Neuronal RNP granule"/>
</dbReference>
<dbReference type="CD-CODE" id="DEE660B4">
    <property type="entry name" value="Stress granule"/>
</dbReference>
<dbReference type="CD-CODE" id="FB4E32DD">
    <property type="entry name" value="Presynaptic clusters and postsynaptic densities"/>
</dbReference>
<dbReference type="ChiTaRS" id="ANXA11">
    <property type="organism name" value="human"/>
</dbReference>
<dbReference type="GeneWiki" id="ANXA11"/>
<dbReference type="GenomeRNAi" id="311"/>
<dbReference type="Pharos" id="P50995">
    <property type="development level" value="Tbio"/>
</dbReference>
<dbReference type="PRO" id="PR:P50995"/>
<dbReference type="Proteomes" id="UP000005640">
    <property type="component" value="Chromosome 10"/>
</dbReference>
<dbReference type="RNAct" id="P50995">
    <property type="molecule type" value="protein"/>
</dbReference>
<dbReference type="Bgee" id="ENSG00000122359">
    <property type="expression patterns" value="Expressed in lower esophagus mucosa and 208 other cell types or tissues"/>
</dbReference>
<dbReference type="ExpressionAtlas" id="P50995">
    <property type="expression patterns" value="baseline and differential"/>
</dbReference>
<dbReference type="GO" id="GO:0042582">
    <property type="term" value="C:azurophil granule"/>
    <property type="evidence" value="ECO:0000314"/>
    <property type="project" value="UniProtKB"/>
</dbReference>
<dbReference type="GO" id="GO:0062023">
    <property type="term" value="C:collagen-containing extracellular matrix"/>
    <property type="evidence" value="ECO:0007005"/>
    <property type="project" value="BHF-UCL"/>
</dbReference>
<dbReference type="GO" id="GO:0005737">
    <property type="term" value="C:cytoplasm"/>
    <property type="evidence" value="ECO:0000314"/>
    <property type="project" value="UniProtKB"/>
</dbReference>
<dbReference type="GO" id="GO:0005829">
    <property type="term" value="C:cytosol"/>
    <property type="evidence" value="ECO:0000314"/>
    <property type="project" value="HPA"/>
</dbReference>
<dbReference type="GO" id="GO:0070062">
    <property type="term" value="C:extracellular exosome"/>
    <property type="evidence" value="ECO:0007005"/>
    <property type="project" value="UniProtKB"/>
</dbReference>
<dbReference type="GO" id="GO:0043231">
    <property type="term" value="C:intracellular membrane-bounded organelle"/>
    <property type="evidence" value="ECO:0000314"/>
    <property type="project" value="HPA"/>
</dbReference>
<dbReference type="GO" id="GO:0042470">
    <property type="term" value="C:melanosome"/>
    <property type="evidence" value="ECO:0007669"/>
    <property type="project" value="UniProtKB-SubCell"/>
</dbReference>
<dbReference type="GO" id="GO:0016020">
    <property type="term" value="C:membrane"/>
    <property type="evidence" value="ECO:0007005"/>
    <property type="project" value="UniProtKB"/>
</dbReference>
<dbReference type="GO" id="GO:0030496">
    <property type="term" value="C:midbody"/>
    <property type="evidence" value="ECO:0000314"/>
    <property type="project" value="UniProtKB"/>
</dbReference>
<dbReference type="GO" id="GO:0005635">
    <property type="term" value="C:nuclear envelope"/>
    <property type="evidence" value="ECO:0000314"/>
    <property type="project" value="UniProtKB"/>
</dbReference>
<dbReference type="GO" id="GO:0005654">
    <property type="term" value="C:nucleoplasm"/>
    <property type="evidence" value="ECO:0000314"/>
    <property type="project" value="HPA"/>
</dbReference>
<dbReference type="GO" id="GO:0005634">
    <property type="term" value="C:nucleus"/>
    <property type="evidence" value="ECO:0000318"/>
    <property type="project" value="GO_Central"/>
</dbReference>
<dbReference type="GO" id="GO:0045335">
    <property type="term" value="C:phagocytic vesicle"/>
    <property type="evidence" value="ECO:0000314"/>
    <property type="project" value="UniProtKB"/>
</dbReference>
<dbReference type="GO" id="GO:0005886">
    <property type="term" value="C:plasma membrane"/>
    <property type="evidence" value="ECO:0000318"/>
    <property type="project" value="GO_Central"/>
</dbReference>
<dbReference type="GO" id="GO:0042581">
    <property type="term" value="C:specific granule"/>
    <property type="evidence" value="ECO:0000314"/>
    <property type="project" value="UniProtKB"/>
</dbReference>
<dbReference type="GO" id="GO:0005819">
    <property type="term" value="C:spindle"/>
    <property type="evidence" value="ECO:0000314"/>
    <property type="project" value="UniProtKB"/>
</dbReference>
<dbReference type="GO" id="GO:0012506">
    <property type="term" value="C:vesicle membrane"/>
    <property type="evidence" value="ECO:0000318"/>
    <property type="project" value="GO_Central"/>
</dbReference>
<dbReference type="GO" id="GO:0005509">
    <property type="term" value="F:calcium ion binding"/>
    <property type="evidence" value="ECO:0007669"/>
    <property type="project" value="Ensembl"/>
</dbReference>
<dbReference type="GO" id="GO:0005544">
    <property type="term" value="F:calcium-dependent phospholipid binding"/>
    <property type="evidence" value="ECO:0000318"/>
    <property type="project" value="GO_Central"/>
</dbReference>
<dbReference type="GO" id="GO:0048306">
    <property type="term" value="F:calcium-dependent protein binding"/>
    <property type="evidence" value="ECO:0000353"/>
    <property type="project" value="UniProtKB"/>
</dbReference>
<dbReference type="GO" id="GO:0023026">
    <property type="term" value="F:MHC class II protein complex binding"/>
    <property type="evidence" value="ECO:0007005"/>
    <property type="project" value="UniProtKB"/>
</dbReference>
<dbReference type="GO" id="GO:0008429">
    <property type="term" value="F:phosphatidylethanolamine binding"/>
    <property type="evidence" value="ECO:0007669"/>
    <property type="project" value="Ensembl"/>
</dbReference>
<dbReference type="GO" id="GO:0001786">
    <property type="term" value="F:phosphatidylserine binding"/>
    <property type="evidence" value="ECO:0000318"/>
    <property type="project" value="GO_Central"/>
</dbReference>
<dbReference type="GO" id="GO:0003723">
    <property type="term" value="F:RNA binding"/>
    <property type="evidence" value="ECO:0007005"/>
    <property type="project" value="UniProtKB"/>
</dbReference>
<dbReference type="GO" id="GO:0044548">
    <property type="term" value="F:S100 protein binding"/>
    <property type="evidence" value="ECO:0000353"/>
    <property type="project" value="UniProtKB"/>
</dbReference>
<dbReference type="GO" id="GO:0032506">
    <property type="term" value="P:cytokinetic process"/>
    <property type="evidence" value="ECO:0000315"/>
    <property type="project" value="UniProtKB"/>
</dbReference>
<dbReference type="GO" id="GO:0006909">
    <property type="term" value="P:phagocytosis"/>
    <property type="evidence" value="ECO:0000270"/>
    <property type="project" value="UniProtKB"/>
</dbReference>
<dbReference type="GO" id="GO:0051592">
    <property type="term" value="P:response to calcium ion"/>
    <property type="evidence" value="ECO:0000314"/>
    <property type="project" value="UniProtKB"/>
</dbReference>
<dbReference type="FunFam" id="1.10.220.10:FF:000001">
    <property type="entry name" value="Annexin"/>
    <property type="match status" value="1"/>
</dbReference>
<dbReference type="FunFam" id="1.10.220.10:FF:000002">
    <property type="entry name" value="Annexin"/>
    <property type="match status" value="1"/>
</dbReference>
<dbReference type="FunFam" id="1.10.220.10:FF:000003">
    <property type="entry name" value="Annexin"/>
    <property type="match status" value="1"/>
</dbReference>
<dbReference type="FunFam" id="1.10.220.10:FF:000004">
    <property type="entry name" value="Annexin"/>
    <property type="match status" value="1"/>
</dbReference>
<dbReference type="Gene3D" id="1.10.220.10">
    <property type="entry name" value="Annexin"/>
    <property type="match status" value="4"/>
</dbReference>
<dbReference type="InterPro" id="IPR001464">
    <property type="entry name" value="Annexin"/>
</dbReference>
<dbReference type="InterPro" id="IPR018502">
    <property type="entry name" value="Annexin_repeat"/>
</dbReference>
<dbReference type="InterPro" id="IPR018252">
    <property type="entry name" value="Annexin_repeat_CS"/>
</dbReference>
<dbReference type="InterPro" id="IPR037104">
    <property type="entry name" value="Annexin_sf"/>
</dbReference>
<dbReference type="InterPro" id="IPR008157">
    <property type="entry name" value="ANX11"/>
</dbReference>
<dbReference type="PANTHER" id="PTHR10502">
    <property type="entry name" value="ANNEXIN"/>
    <property type="match status" value="1"/>
</dbReference>
<dbReference type="PANTHER" id="PTHR10502:SF29">
    <property type="entry name" value="ANNEXIN A11"/>
    <property type="match status" value="1"/>
</dbReference>
<dbReference type="Pfam" id="PF00191">
    <property type="entry name" value="Annexin"/>
    <property type="match status" value="4"/>
</dbReference>
<dbReference type="PRINTS" id="PR00196">
    <property type="entry name" value="ANNEXIN"/>
</dbReference>
<dbReference type="PRINTS" id="PR01810">
    <property type="entry name" value="ANNEXINXI"/>
</dbReference>
<dbReference type="SMART" id="SM00335">
    <property type="entry name" value="ANX"/>
    <property type="match status" value="4"/>
</dbReference>
<dbReference type="SUPFAM" id="SSF47874">
    <property type="entry name" value="Annexin"/>
    <property type="match status" value="1"/>
</dbReference>
<dbReference type="PROSITE" id="PS00223">
    <property type="entry name" value="ANNEXIN_1"/>
    <property type="match status" value="4"/>
</dbReference>
<dbReference type="PROSITE" id="PS51897">
    <property type="entry name" value="ANNEXIN_2"/>
    <property type="match status" value="4"/>
</dbReference>
<comment type="function">
    <text evidence="1 5">Binds specifically to calcyclin in a calcium-dependent manner (By similarity). Required for midbody formation and completion of the terminal phase of cytokinesis.</text>
</comment>
<comment type="subunit">
    <text evidence="1 4 5 6 7">Interacts with S100A6 (PubMed:28469040). Interacts with PDCD6 in a calcium-dependent manner. Interacts with KIF23 during cytokinesis.</text>
</comment>
<comment type="interaction">
    <interactant intactId="EBI-715243">
        <id>P50995</id>
    </interactant>
    <interactant intactId="EBI-2117357">
        <id>P15289</id>
        <label>ARSA</label>
    </interactant>
    <organismsDiffer>false</organismsDiffer>
    <experiments>3</experiments>
</comment>
<comment type="interaction">
    <interactant intactId="EBI-715243">
        <id>P50995</id>
    </interactant>
    <interactant intactId="EBI-747776">
        <id>Q53EZ4</id>
        <label>CEP55</label>
    </interactant>
    <organismsDiffer>false</organismsDiffer>
    <experiments>8</experiments>
</comment>
<comment type="interaction">
    <interactant intactId="EBI-715243">
        <id>P50995</id>
    </interactant>
    <interactant intactId="EBI-12121668">
        <id>Q96AE4-2</id>
        <label>FUBP1</label>
    </interactant>
    <organismsDiffer>false</organismsDiffer>
    <experiments>3</experiments>
</comment>
<comment type="interaction">
    <interactant intactId="EBI-715243">
        <id>P50995</id>
    </interactant>
    <interactant intactId="EBI-11953846">
        <id>Q52LG2</id>
        <label>KRTAP13-2</label>
    </interactant>
    <organismsDiffer>false</organismsDiffer>
    <experiments>3</experiments>
</comment>
<comment type="interaction">
    <interactant intactId="EBI-715243">
        <id>P50995</id>
    </interactant>
    <interactant intactId="EBI-11962084">
        <id>Q3LI66</id>
        <label>KRTAP6-2</label>
    </interactant>
    <organismsDiffer>false</organismsDiffer>
    <experiments>3</experiments>
</comment>
<comment type="interaction">
    <interactant intactId="EBI-715243">
        <id>P50995</id>
    </interactant>
    <interactant intactId="EBI-10271199">
        <id>Q8NI38</id>
        <label>NFKBID</label>
    </interactant>
    <organismsDiffer>false</organismsDiffer>
    <experiments>3</experiments>
</comment>
<comment type="interaction">
    <interactant intactId="EBI-715243">
        <id>P50995</id>
    </interactant>
    <interactant intactId="EBI-352915">
        <id>O75340</id>
        <label>PDCD6</label>
    </interactant>
    <organismsDiffer>false</organismsDiffer>
    <experiments>5</experiments>
</comment>
<comment type="interaction">
    <interactant intactId="EBI-715243">
        <id>P50995</id>
    </interactant>
    <interactant intactId="EBI-357061">
        <id>Q92734</id>
        <label>TFG</label>
    </interactant>
    <organismsDiffer>false</organismsDiffer>
    <experiments>4</experiments>
</comment>
<comment type="interaction">
    <interactant intactId="EBI-715243">
        <id>P50995</id>
    </interactant>
    <interactant intactId="EBI-12040603">
        <id>Q9NZC7-5</id>
        <label>WWOX</label>
    </interactant>
    <organismsDiffer>false</organismsDiffer>
    <experiments>3</experiments>
</comment>
<comment type="subcellular location">
    <subcellularLocation>
        <location evidence="7">Cytoplasm</location>
    </subcellularLocation>
    <subcellularLocation>
        <location>Melanosome</location>
    </subcellularLocation>
    <subcellularLocation>
        <location>Nucleus envelope</location>
    </subcellularLocation>
    <subcellularLocation>
        <location evidence="7">Nucleus</location>
        <location evidence="7">Nucleoplasm</location>
    </subcellularLocation>
    <subcellularLocation>
        <location>Cytoplasm</location>
        <location>Cytoskeleton</location>
        <location>Spindle</location>
    </subcellularLocation>
    <text evidence="1">Found throughout the nucleoplasm at interphase and during mitosis concentrates around the mitotic apparatus (By similarity). Elevation of intracellular calcium causes relocalization from the nucleoplasm to the nuclear envelope, with little effect on the cytoplasmic pool. Localization to the nuclear envelope is cell-cycle dependent.</text>
</comment>
<comment type="alternative products">
    <event type="alternative splicing"/>
    <isoform>
        <id>P50995-1</id>
        <name>1</name>
        <sequence type="displayed"/>
    </isoform>
    <isoform>
        <id>P50995-2</id>
        <name>2</name>
        <sequence type="described" ref="VSP_054553"/>
    </isoform>
</comment>
<comment type="domain">
    <text>A pair of annexin repeats may form one binding site for calcium and phospholipid.</text>
</comment>
<comment type="disease" evidence="7">
    <disease id="DI-05172">
        <name>Amyotrophic lateral sclerosis 23</name>
        <acronym>ALS23</acronym>
        <description>A form of amyotrophic lateral sclerosis, a neurodegenerative disorder affecting upper motor neurons in the brain and lower motor neurons in the brain stem and spinal cord, resulting in fatal paralysis. Sensory abnormalities are absent. The pathologic hallmarks of the disease include pallor of the corticospinal tract due to loss of motor neurons, presence of ubiquitin-positive inclusions within surviving motor neurons, and deposition of pathologic aggregates. The etiology of amyotrophic lateral sclerosis is likely to be multifactorial, involving both genetic and environmental factors. The disease is inherited in 5-10% of the cases. ALS23 is an autosomal dominant form with incomplete penetrance.</description>
        <dbReference type="MIM" id="617839"/>
    </disease>
    <text>The disease is caused by variants affecting the gene represented in this entry.</text>
</comment>
<comment type="disease" evidence="8">
    <disease id="DI-06329">
        <name>Inclusion body myopathy and brain white matter abnormalities</name>
        <acronym>IBMWMA</acronym>
        <description>An autosomal dominant, adult-onset disorder characterized predominantly by proximal limb girdle muscle weakness affecting the lower and upper limbs and resulting in gait difficulties and scapular winging. Additional features may include dysarthria, dysphagia, low back pain, and hyporeflexia. Muscle biopsy shows fiber type variation, internal nuclei, rimmed vacuoles, and cytoplasmic protein aggregates or inclusions. Cognitive impairment or frontotemporal dementia occurs in some patients.</description>
        <dbReference type="MIM" id="619733"/>
    </disease>
    <text>The gene represented in this entry is involved in disease pathogenesis.</text>
</comment>
<comment type="similarity">
    <text evidence="2 10">Belongs to the annexin family.</text>
</comment>
<proteinExistence type="evidence at protein level"/>
<accession>P50995</accession>
<accession>B4DVE7</accession>
<evidence type="ECO:0000250" key="1"/>
<evidence type="ECO:0000255" key="2">
    <source>
        <dbReference type="PROSITE-ProRule" id="PRU01245"/>
    </source>
</evidence>
<evidence type="ECO:0000256" key="3">
    <source>
        <dbReference type="SAM" id="MobiDB-lite"/>
    </source>
</evidence>
<evidence type="ECO:0000269" key="4">
    <source>
    </source>
</evidence>
<evidence type="ECO:0000269" key="5">
    <source>
    </source>
</evidence>
<evidence type="ECO:0000269" key="6">
    <source>
    </source>
</evidence>
<evidence type="ECO:0000269" key="7">
    <source>
    </source>
</evidence>
<evidence type="ECO:0000269" key="8">
    <source>
    </source>
</evidence>
<evidence type="ECO:0000303" key="9">
    <source>
    </source>
</evidence>
<evidence type="ECO:0000305" key="10"/>
<evidence type="ECO:0007744" key="11">
    <source>
    </source>
</evidence>
<evidence type="ECO:0007829" key="12">
    <source>
        <dbReference type="PDB" id="9FOR"/>
    </source>
</evidence>
<keyword id="KW-0002">3D-structure</keyword>
<keyword id="KW-0007">Acetylation</keyword>
<keyword id="KW-0025">Alternative splicing</keyword>
<keyword id="KW-0036">Amyotrophic lateral sclerosis</keyword>
<keyword id="KW-0041">Annexin</keyword>
<keyword id="KW-0106">Calcium</keyword>
<keyword id="KW-0111">Calcium/phospholipid-binding</keyword>
<keyword id="KW-0131">Cell cycle</keyword>
<keyword id="KW-0132">Cell division</keyword>
<keyword id="KW-0963">Cytoplasm</keyword>
<keyword id="KW-0206">Cytoskeleton</keyword>
<keyword id="KW-0225">Disease variant</keyword>
<keyword id="KW-0523">Neurodegeneration</keyword>
<keyword id="KW-0539">Nucleus</keyword>
<keyword id="KW-1267">Proteomics identification</keyword>
<keyword id="KW-1185">Reference proteome</keyword>
<keyword id="KW-0677">Repeat</keyword>